<gene>
    <name evidence="1" type="primary">argH</name>
    <name type="ordered locus">Adeh_4071</name>
</gene>
<keyword id="KW-0028">Amino-acid biosynthesis</keyword>
<keyword id="KW-0055">Arginine biosynthesis</keyword>
<keyword id="KW-0963">Cytoplasm</keyword>
<keyword id="KW-0456">Lyase</keyword>
<keyword id="KW-1185">Reference proteome</keyword>
<dbReference type="EC" id="4.3.2.1" evidence="1"/>
<dbReference type="EMBL" id="CP000251">
    <property type="protein sequence ID" value="ABC83835.1"/>
    <property type="molecule type" value="Genomic_DNA"/>
</dbReference>
<dbReference type="RefSeq" id="WP_011423117.1">
    <property type="nucleotide sequence ID" value="NC_007760.1"/>
</dbReference>
<dbReference type="SMR" id="Q2IGX8"/>
<dbReference type="STRING" id="290397.Adeh_4071"/>
<dbReference type="KEGG" id="ade:Adeh_4071"/>
<dbReference type="eggNOG" id="COG0165">
    <property type="taxonomic scope" value="Bacteria"/>
</dbReference>
<dbReference type="HOGENOM" id="CLU_027272_2_3_7"/>
<dbReference type="OrthoDB" id="9769623at2"/>
<dbReference type="UniPathway" id="UPA00068">
    <property type="reaction ID" value="UER00114"/>
</dbReference>
<dbReference type="Proteomes" id="UP000001935">
    <property type="component" value="Chromosome"/>
</dbReference>
<dbReference type="GO" id="GO:0005829">
    <property type="term" value="C:cytosol"/>
    <property type="evidence" value="ECO:0007669"/>
    <property type="project" value="TreeGrafter"/>
</dbReference>
<dbReference type="GO" id="GO:0004056">
    <property type="term" value="F:argininosuccinate lyase activity"/>
    <property type="evidence" value="ECO:0007669"/>
    <property type="project" value="UniProtKB-UniRule"/>
</dbReference>
<dbReference type="GO" id="GO:0042450">
    <property type="term" value="P:arginine biosynthetic process via ornithine"/>
    <property type="evidence" value="ECO:0007669"/>
    <property type="project" value="InterPro"/>
</dbReference>
<dbReference type="GO" id="GO:0006526">
    <property type="term" value="P:L-arginine biosynthetic process"/>
    <property type="evidence" value="ECO:0007669"/>
    <property type="project" value="UniProtKB-UniRule"/>
</dbReference>
<dbReference type="CDD" id="cd01359">
    <property type="entry name" value="Argininosuccinate_lyase"/>
    <property type="match status" value="1"/>
</dbReference>
<dbReference type="FunFam" id="1.10.40.30:FF:000001">
    <property type="entry name" value="Argininosuccinate lyase"/>
    <property type="match status" value="1"/>
</dbReference>
<dbReference type="FunFam" id="1.20.200.10:FF:000015">
    <property type="entry name" value="argininosuccinate lyase isoform X2"/>
    <property type="match status" value="1"/>
</dbReference>
<dbReference type="Gene3D" id="1.10.40.30">
    <property type="entry name" value="Fumarase/aspartase (C-terminal domain)"/>
    <property type="match status" value="1"/>
</dbReference>
<dbReference type="Gene3D" id="1.20.200.10">
    <property type="entry name" value="Fumarase/aspartase (Central domain)"/>
    <property type="match status" value="1"/>
</dbReference>
<dbReference type="Gene3D" id="1.10.275.10">
    <property type="entry name" value="Fumarase/aspartase (N-terminal domain)"/>
    <property type="match status" value="1"/>
</dbReference>
<dbReference type="HAMAP" id="MF_00006">
    <property type="entry name" value="Arg_succ_lyase"/>
    <property type="match status" value="1"/>
</dbReference>
<dbReference type="InterPro" id="IPR029419">
    <property type="entry name" value="Arg_succ_lyase_C"/>
</dbReference>
<dbReference type="InterPro" id="IPR009049">
    <property type="entry name" value="Argininosuccinate_lyase"/>
</dbReference>
<dbReference type="InterPro" id="IPR024083">
    <property type="entry name" value="Fumarase/histidase_N"/>
</dbReference>
<dbReference type="InterPro" id="IPR020557">
    <property type="entry name" value="Fumarate_lyase_CS"/>
</dbReference>
<dbReference type="InterPro" id="IPR000362">
    <property type="entry name" value="Fumarate_lyase_fam"/>
</dbReference>
<dbReference type="InterPro" id="IPR022761">
    <property type="entry name" value="Fumarate_lyase_N"/>
</dbReference>
<dbReference type="InterPro" id="IPR008948">
    <property type="entry name" value="L-Aspartase-like"/>
</dbReference>
<dbReference type="NCBIfam" id="TIGR00838">
    <property type="entry name" value="argH"/>
    <property type="match status" value="1"/>
</dbReference>
<dbReference type="PANTHER" id="PTHR43814">
    <property type="entry name" value="ARGININOSUCCINATE LYASE"/>
    <property type="match status" value="1"/>
</dbReference>
<dbReference type="PANTHER" id="PTHR43814:SF1">
    <property type="entry name" value="ARGININOSUCCINATE LYASE"/>
    <property type="match status" value="1"/>
</dbReference>
<dbReference type="Pfam" id="PF14698">
    <property type="entry name" value="ASL_C2"/>
    <property type="match status" value="1"/>
</dbReference>
<dbReference type="Pfam" id="PF00206">
    <property type="entry name" value="Lyase_1"/>
    <property type="match status" value="1"/>
</dbReference>
<dbReference type="PRINTS" id="PR00145">
    <property type="entry name" value="ARGSUCLYASE"/>
</dbReference>
<dbReference type="PRINTS" id="PR00149">
    <property type="entry name" value="FUMRATELYASE"/>
</dbReference>
<dbReference type="SUPFAM" id="SSF48557">
    <property type="entry name" value="L-aspartase-like"/>
    <property type="match status" value="1"/>
</dbReference>
<dbReference type="PROSITE" id="PS00163">
    <property type="entry name" value="FUMARATE_LYASES"/>
    <property type="match status" value="1"/>
</dbReference>
<sequence>MRANSKAKPVSRAALAGEADPRLVALSVSIQDDGALYAEDIRGSQAHVSMLAAQGIVPKAAARRIVAALDQVRAEFAAGRIRFDPALEDVHTHVERRLGELVGKDAGYLHAGRSRNDQVALDERLFIVGACDRCDAALERLQRAFLGQARAHERTILPGYTHLQRAQPVSLAHHLLAYVEMFGRDRERFAEVRRRAAVSPLGSGALAGTTLPLDREAVAARLGLAGVTHNSLDAVSDRDSAAELLFACALAAVHLSRIGEELVLWTTKEFGFATLSDAFATGSSLMPQKKNPDVGELARGRAGRALGDLVALLAILKGLPLSYNRDLQEDKRPLLGGPEALVLTADAVAGAVGTATFHAERMEEALGSGEALATDAAEYLVERGVPFREAHEAVGKAAAFSAREGRPMARLTAAEWASFHRRFEKDVLRCFDARRSLKRRELPGAPGPRAVRAELRRWEKALGKARR</sequence>
<reference key="1">
    <citation type="submission" date="2006-01" db="EMBL/GenBank/DDBJ databases">
        <title>Complete sequence of Anaeromyxobacter dehalogenans 2CP-C.</title>
        <authorList>
            <person name="Copeland A."/>
            <person name="Lucas S."/>
            <person name="Lapidus A."/>
            <person name="Barry K."/>
            <person name="Detter J.C."/>
            <person name="Glavina T."/>
            <person name="Hammon N."/>
            <person name="Israni S."/>
            <person name="Pitluck S."/>
            <person name="Brettin T."/>
            <person name="Bruce D."/>
            <person name="Han C."/>
            <person name="Tapia R."/>
            <person name="Gilna P."/>
            <person name="Kiss H."/>
            <person name="Schmutz J."/>
            <person name="Larimer F."/>
            <person name="Land M."/>
            <person name="Kyrpides N."/>
            <person name="Anderson I."/>
            <person name="Sanford R.A."/>
            <person name="Ritalahti K.M."/>
            <person name="Thomas H.S."/>
            <person name="Kirby J.R."/>
            <person name="Zhulin I.B."/>
            <person name="Loeffler F.E."/>
            <person name="Richardson P."/>
        </authorList>
    </citation>
    <scope>NUCLEOTIDE SEQUENCE [LARGE SCALE GENOMIC DNA]</scope>
    <source>
        <strain>2CP-C</strain>
    </source>
</reference>
<evidence type="ECO:0000255" key="1">
    <source>
        <dbReference type="HAMAP-Rule" id="MF_00006"/>
    </source>
</evidence>
<comment type="catalytic activity">
    <reaction evidence="1">
        <text>2-(N(omega)-L-arginino)succinate = fumarate + L-arginine</text>
        <dbReference type="Rhea" id="RHEA:24020"/>
        <dbReference type="ChEBI" id="CHEBI:29806"/>
        <dbReference type="ChEBI" id="CHEBI:32682"/>
        <dbReference type="ChEBI" id="CHEBI:57472"/>
        <dbReference type="EC" id="4.3.2.1"/>
    </reaction>
</comment>
<comment type="pathway">
    <text evidence="1">Amino-acid biosynthesis; L-arginine biosynthesis; L-arginine from L-ornithine and carbamoyl phosphate: step 3/3.</text>
</comment>
<comment type="subcellular location">
    <subcellularLocation>
        <location evidence="1">Cytoplasm</location>
    </subcellularLocation>
</comment>
<comment type="similarity">
    <text evidence="1">Belongs to the lyase 1 family. Argininosuccinate lyase subfamily.</text>
</comment>
<organism>
    <name type="scientific">Anaeromyxobacter dehalogenans (strain 2CP-C)</name>
    <dbReference type="NCBI Taxonomy" id="290397"/>
    <lineage>
        <taxon>Bacteria</taxon>
        <taxon>Pseudomonadati</taxon>
        <taxon>Myxococcota</taxon>
        <taxon>Myxococcia</taxon>
        <taxon>Myxococcales</taxon>
        <taxon>Cystobacterineae</taxon>
        <taxon>Anaeromyxobacteraceae</taxon>
        <taxon>Anaeromyxobacter</taxon>
    </lineage>
</organism>
<protein>
    <recommendedName>
        <fullName evidence="1">Argininosuccinate lyase</fullName>
        <shortName evidence="1">ASAL</shortName>
        <ecNumber evidence="1">4.3.2.1</ecNumber>
    </recommendedName>
    <alternativeName>
        <fullName evidence="1">Arginosuccinase</fullName>
    </alternativeName>
</protein>
<feature type="chain" id="PRO_0000240710" description="Argininosuccinate lyase">
    <location>
        <begin position="1"/>
        <end position="467"/>
    </location>
</feature>
<accession>Q2IGX8</accession>
<name>ARLY_ANADE</name>
<proteinExistence type="inferred from homology"/>